<sequence length="338" mass="36602">MSLLRSLRLCLVARTGSCPLSALGPGPLLPSLQAGLPLLQSPQQWHTFHSGSWLSSASSKELLMKLRRKTGYSFINCKKALETCGGDLKQAESWLHKQAQKEGWSKAARLHGRKTKEGLIGLLQEGDTTVLVEVNCETDFVSRNLKFQQLVQQVALGTLLHCQNLKDQLSTYSKGFLNSSELSELPAGPEREGSLKDQLALAIGKLGENMILKRAAWVKVPAGFYVGSYVHGAMHSPSLHNLVLGKYGALVICETSELKANLADLGRRLGQHVVGMAPLSVGSLDDEPGGEAETKMLSQPYLLDPSITLGQYVQPHGVSVVDFVRFECGEGEDAADAE</sequence>
<organism>
    <name type="scientific">Bos taurus</name>
    <name type="common">Bovine</name>
    <dbReference type="NCBI Taxonomy" id="9913"/>
    <lineage>
        <taxon>Eukaryota</taxon>
        <taxon>Metazoa</taxon>
        <taxon>Chordata</taxon>
        <taxon>Craniata</taxon>
        <taxon>Vertebrata</taxon>
        <taxon>Euteleostomi</taxon>
        <taxon>Mammalia</taxon>
        <taxon>Eutheria</taxon>
        <taxon>Laurasiatheria</taxon>
        <taxon>Artiodactyla</taxon>
        <taxon>Ruminantia</taxon>
        <taxon>Pecora</taxon>
        <taxon>Bovidae</taxon>
        <taxon>Bovinae</taxon>
        <taxon>Bos</taxon>
    </lineage>
</organism>
<evidence type="ECO:0000250" key="1">
    <source>
        <dbReference type="UniProtKB" id="P43897"/>
    </source>
</evidence>
<evidence type="ECO:0000250" key="2">
    <source>
        <dbReference type="UniProtKB" id="Q9CZR8"/>
    </source>
</evidence>
<evidence type="ECO:0000255" key="3">
    <source>
        <dbReference type="HAMAP-Rule" id="MF_03135"/>
    </source>
</evidence>
<evidence type="ECO:0007829" key="4">
    <source>
        <dbReference type="PDB" id="1XB2"/>
    </source>
</evidence>
<keyword id="KW-0002">3D-structure</keyword>
<keyword id="KW-0903">Direct protein sequencing</keyword>
<keyword id="KW-0251">Elongation factor</keyword>
<keyword id="KW-0496">Mitochondrion</keyword>
<keyword id="KW-0597">Phosphoprotein</keyword>
<keyword id="KW-0648">Protein biosynthesis</keyword>
<keyword id="KW-1185">Reference proteome</keyword>
<keyword id="KW-0809">Transit peptide</keyword>
<proteinExistence type="evidence at protein level"/>
<gene>
    <name evidence="3" type="primary">TSFM</name>
</gene>
<comment type="function">
    <text evidence="3">Associates with the EF-Tu.GDP complex and induces the exchange of GDP to GTP. It remains bound to the aminoacyl-tRNA.EF-Tu.GTP complex up to the GTP hydrolysis stage on the ribosome.</text>
</comment>
<comment type="subcellular location">
    <subcellularLocation>
        <location>Mitochondrion</location>
    </subcellularLocation>
</comment>
<comment type="similarity">
    <text evidence="3">Belongs to the EF-Ts family.</text>
</comment>
<name>EFTS_BOVIN</name>
<dbReference type="EMBL" id="L37935">
    <property type="protein sequence ID" value="AAA96807.1"/>
    <property type="molecule type" value="mRNA"/>
</dbReference>
<dbReference type="EMBL" id="BC149988">
    <property type="protein sequence ID" value="AAI49989.1"/>
    <property type="molecule type" value="mRNA"/>
</dbReference>
<dbReference type="PIR" id="I45941">
    <property type="entry name" value="I45941"/>
</dbReference>
<dbReference type="RefSeq" id="NP_776629.1">
    <property type="nucleotide sequence ID" value="NM_174204.3"/>
</dbReference>
<dbReference type="PDB" id="1XB2">
    <property type="method" value="X-ray"/>
    <property type="resolution" value="2.20 A"/>
    <property type="chains" value="B=56-338"/>
</dbReference>
<dbReference type="PDBsum" id="1XB2"/>
<dbReference type="SMR" id="P43896"/>
<dbReference type="FunCoup" id="P43896">
    <property type="interactions" value="3165"/>
</dbReference>
<dbReference type="IntAct" id="P43896">
    <property type="interactions" value="1"/>
</dbReference>
<dbReference type="STRING" id="9913.ENSBTAP00000022496"/>
<dbReference type="PaxDb" id="9913-ENSBTAP00000022496"/>
<dbReference type="GeneID" id="281551"/>
<dbReference type="KEGG" id="bta:281551"/>
<dbReference type="CTD" id="10102"/>
<dbReference type="eggNOG" id="KOG1071">
    <property type="taxonomic scope" value="Eukaryota"/>
</dbReference>
<dbReference type="HOGENOM" id="CLU_047155_4_0_1"/>
<dbReference type="InParanoid" id="P43896"/>
<dbReference type="OrthoDB" id="277235at2759"/>
<dbReference type="TreeFam" id="TF314154"/>
<dbReference type="EvolutionaryTrace" id="P43896"/>
<dbReference type="Proteomes" id="UP000009136">
    <property type="component" value="Unplaced"/>
</dbReference>
<dbReference type="GO" id="GO:0005759">
    <property type="term" value="C:mitochondrial matrix"/>
    <property type="evidence" value="ECO:0000304"/>
    <property type="project" value="Reactome"/>
</dbReference>
<dbReference type="GO" id="GO:0003746">
    <property type="term" value="F:translation elongation factor activity"/>
    <property type="evidence" value="ECO:0000318"/>
    <property type="project" value="GO_Central"/>
</dbReference>
<dbReference type="GO" id="GO:0070125">
    <property type="term" value="P:mitochondrial translational elongation"/>
    <property type="evidence" value="ECO:0000318"/>
    <property type="project" value="GO_Central"/>
</dbReference>
<dbReference type="GO" id="GO:0070129">
    <property type="term" value="P:regulation of mitochondrial translation"/>
    <property type="evidence" value="ECO:0000250"/>
    <property type="project" value="UniProtKB"/>
</dbReference>
<dbReference type="CDD" id="cd14275">
    <property type="entry name" value="UBA_EF-Ts"/>
    <property type="match status" value="1"/>
</dbReference>
<dbReference type="FunFam" id="1.10.8.10:FF:000031">
    <property type="entry name" value="Elongation factor Ts, mitochondrial"/>
    <property type="match status" value="1"/>
</dbReference>
<dbReference type="FunFam" id="3.30.479.20:FF:000007">
    <property type="entry name" value="Elongation factor Ts, mitochondrial"/>
    <property type="match status" value="1"/>
</dbReference>
<dbReference type="FunFam" id="3.30.479.20:FF:000008">
    <property type="entry name" value="Elongation factor Ts, mitochondrial"/>
    <property type="match status" value="1"/>
</dbReference>
<dbReference type="Gene3D" id="1.10.8.10">
    <property type="entry name" value="DNA helicase RuvA subunit, C-terminal domain"/>
    <property type="match status" value="1"/>
</dbReference>
<dbReference type="Gene3D" id="3.30.479.20">
    <property type="entry name" value="Elongation factor Ts, dimerisation domain"/>
    <property type="match status" value="2"/>
</dbReference>
<dbReference type="HAMAP" id="MF_00050">
    <property type="entry name" value="EF_Ts"/>
    <property type="match status" value="1"/>
</dbReference>
<dbReference type="InterPro" id="IPR036402">
    <property type="entry name" value="EF-Ts_dimer_sf"/>
</dbReference>
<dbReference type="InterPro" id="IPR001816">
    <property type="entry name" value="Transl_elong_EFTs/EF1B"/>
</dbReference>
<dbReference type="InterPro" id="IPR014039">
    <property type="entry name" value="Transl_elong_EFTs/EF1B_dimer"/>
</dbReference>
<dbReference type="InterPro" id="IPR018101">
    <property type="entry name" value="Transl_elong_Ts_CS"/>
</dbReference>
<dbReference type="InterPro" id="IPR009060">
    <property type="entry name" value="UBA-like_sf"/>
</dbReference>
<dbReference type="PANTHER" id="PTHR11741">
    <property type="entry name" value="ELONGATION FACTOR TS"/>
    <property type="match status" value="1"/>
</dbReference>
<dbReference type="PANTHER" id="PTHR11741:SF0">
    <property type="entry name" value="ELONGATION FACTOR TS, MITOCHONDRIAL"/>
    <property type="match status" value="1"/>
</dbReference>
<dbReference type="Pfam" id="PF25025">
    <property type="entry name" value="EF-Ts_N"/>
    <property type="match status" value="1"/>
</dbReference>
<dbReference type="Pfam" id="PF00889">
    <property type="entry name" value="EF_TS"/>
    <property type="match status" value="1"/>
</dbReference>
<dbReference type="SUPFAM" id="SSF54713">
    <property type="entry name" value="Elongation factor Ts (EF-Ts), dimerisation domain"/>
    <property type="match status" value="2"/>
</dbReference>
<dbReference type="SUPFAM" id="SSF46934">
    <property type="entry name" value="UBA-like"/>
    <property type="match status" value="1"/>
</dbReference>
<dbReference type="PROSITE" id="PS01126">
    <property type="entry name" value="EF_TS_1"/>
    <property type="match status" value="1"/>
</dbReference>
<dbReference type="PROSITE" id="PS01127">
    <property type="entry name" value="EF_TS_2"/>
    <property type="match status" value="1"/>
</dbReference>
<reference key="1">
    <citation type="journal article" date="1995" name="J. Biol. Chem.">
        <title>Cloning and expression of mitochondrial translational elongation factor Ts from bovine and human liver.</title>
        <authorList>
            <person name="Xin H."/>
            <person name="Woriax V."/>
            <person name="Burkhart W."/>
            <person name="Spremulli L.L."/>
        </authorList>
    </citation>
    <scope>NUCLEOTIDE SEQUENCE [MRNA]</scope>
    <scope>PARTIAL PROTEIN SEQUENCE</scope>
    <source>
        <tissue>Liver</tissue>
    </source>
</reference>
<reference key="2">
    <citation type="submission" date="2007-07" db="EMBL/GenBank/DDBJ databases">
        <authorList>
            <consortium name="NIH - Mammalian Gene Collection (MGC) project"/>
        </authorList>
    </citation>
    <scope>NUCLEOTIDE SEQUENCE [LARGE SCALE MRNA]</scope>
    <source>
        <strain>Hereford</strain>
        <tissue>Hypothalamus</tissue>
    </source>
</reference>
<reference key="3">
    <citation type="journal article" date="2005" name="J. Biol. Chem.">
        <title>Crystal structure of the bovine mitochondrial elongation factor Tu.Ts complex.</title>
        <authorList>
            <person name="Jeppesen M.G."/>
            <person name="Navratil T."/>
            <person name="Spremulli L.L."/>
            <person name="Nyborg J."/>
        </authorList>
    </citation>
    <scope>X-RAY CRYSTALLOGRAPHY (2.2 ANGSTROMS) OF 56-338 IN COMPLEX WITH TUFM</scope>
</reference>
<protein>
    <recommendedName>
        <fullName evidence="3">Elongation factor Ts, mitochondrial</fullName>
        <shortName evidence="3">EF-Ts</shortName>
        <shortName evidence="3">EF-TsMt</shortName>
    </recommendedName>
</protein>
<accession>P43896</accession>
<accession>A6QQT8</accession>
<feature type="transit peptide" description="Mitochondrion">
    <location>
        <begin position="1"/>
        <end position="55"/>
    </location>
</feature>
<feature type="chain" id="PRO_0000007467" description="Elongation factor Ts, mitochondrial">
    <location>
        <begin position="56"/>
        <end position="338"/>
    </location>
</feature>
<feature type="modified residue" description="N6-succinyllysine" evidence="2">
    <location>
        <position position="89"/>
    </location>
</feature>
<feature type="modified residue" description="N6-succinyllysine" evidence="2">
    <location>
        <position position="146"/>
    </location>
</feature>
<feature type="modified residue" description="N6-succinyllysine" evidence="2">
    <location>
        <position position="205"/>
    </location>
</feature>
<feature type="modified residue" description="Phosphoserine" evidence="1">
    <location>
        <position position="283"/>
    </location>
</feature>
<feature type="helix" evidence="4">
    <location>
        <begin position="57"/>
        <end position="70"/>
    </location>
</feature>
<feature type="helix" evidence="4">
    <location>
        <begin position="74"/>
        <end position="83"/>
    </location>
</feature>
<feature type="turn" evidence="4">
    <location>
        <begin position="84"/>
        <end position="86"/>
    </location>
</feature>
<feature type="helix" evidence="4">
    <location>
        <begin position="88"/>
        <end position="110"/>
    </location>
</feature>
<feature type="strand" evidence="4">
    <location>
        <begin position="117"/>
        <end position="125"/>
    </location>
</feature>
<feature type="strand" evidence="4">
    <location>
        <begin position="128"/>
        <end position="137"/>
    </location>
</feature>
<feature type="helix" evidence="4">
    <location>
        <begin position="139"/>
        <end position="142"/>
    </location>
</feature>
<feature type="helix" evidence="4">
    <location>
        <begin position="145"/>
        <end position="162"/>
    </location>
</feature>
<feature type="strand" evidence="4">
    <location>
        <begin position="169"/>
        <end position="171"/>
    </location>
</feature>
<feature type="strand" evidence="4">
    <location>
        <begin position="173"/>
        <end position="177"/>
    </location>
</feature>
<feature type="helix" evidence="4">
    <location>
        <begin position="179"/>
        <end position="183"/>
    </location>
</feature>
<feature type="strand" evidence="4">
    <location>
        <begin position="189"/>
        <end position="191"/>
    </location>
</feature>
<feature type="helix" evidence="4">
    <location>
        <begin position="195"/>
        <end position="206"/>
    </location>
</feature>
<feature type="strand" evidence="4">
    <location>
        <begin position="210"/>
        <end position="219"/>
    </location>
</feature>
<feature type="strand" evidence="4">
    <location>
        <begin position="224"/>
        <end position="232"/>
    </location>
</feature>
<feature type="strand" evidence="4">
    <location>
        <begin position="243"/>
        <end position="254"/>
    </location>
</feature>
<feature type="helix" evidence="4">
    <location>
        <begin position="259"/>
        <end position="261"/>
    </location>
</feature>
<feature type="helix" evidence="4">
    <location>
        <begin position="263"/>
        <end position="276"/>
    </location>
</feature>
<feature type="helix" evidence="4">
    <location>
        <begin position="290"/>
        <end position="292"/>
    </location>
</feature>
<feature type="helix" evidence="4">
    <location>
        <begin position="296"/>
        <end position="298"/>
    </location>
</feature>
<feature type="helix" evidence="4">
    <location>
        <begin position="309"/>
        <end position="313"/>
    </location>
</feature>
<feature type="helix" evidence="4">
    <location>
        <begin position="314"/>
        <end position="316"/>
    </location>
</feature>
<feature type="strand" evidence="4">
    <location>
        <begin position="319"/>
        <end position="327"/>
    </location>
</feature>